<accession>Q15TB5</accession>
<protein>
    <recommendedName>
        <fullName evidence="1">N-succinylarginine dihydrolase</fullName>
        <ecNumber evidence="1">3.5.3.23</ecNumber>
    </recommendedName>
</protein>
<dbReference type="EC" id="3.5.3.23" evidence="1"/>
<dbReference type="EMBL" id="CP000388">
    <property type="protein sequence ID" value="ABG40873.1"/>
    <property type="molecule type" value="Genomic_DNA"/>
</dbReference>
<dbReference type="RefSeq" id="WP_011575154.1">
    <property type="nucleotide sequence ID" value="NC_008228.1"/>
</dbReference>
<dbReference type="SMR" id="Q15TB5"/>
<dbReference type="STRING" id="342610.Patl_2357"/>
<dbReference type="KEGG" id="pat:Patl_2357"/>
<dbReference type="eggNOG" id="COG3724">
    <property type="taxonomic scope" value="Bacteria"/>
</dbReference>
<dbReference type="HOGENOM" id="CLU_053835_0_0_6"/>
<dbReference type="OrthoDB" id="248552at2"/>
<dbReference type="UniPathway" id="UPA00185">
    <property type="reaction ID" value="UER00280"/>
</dbReference>
<dbReference type="Proteomes" id="UP000001981">
    <property type="component" value="Chromosome"/>
</dbReference>
<dbReference type="GO" id="GO:0009015">
    <property type="term" value="F:N-succinylarginine dihydrolase activity"/>
    <property type="evidence" value="ECO:0007669"/>
    <property type="project" value="UniProtKB-UniRule"/>
</dbReference>
<dbReference type="GO" id="GO:0019544">
    <property type="term" value="P:arginine catabolic process to glutamate"/>
    <property type="evidence" value="ECO:0007669"/>
    <property type="project" value="UniProtKB-UniRule"/>
</dbReference>
<dbReference type="GO" id="GO:0019545">
    <property type="term" value="P:arginine catabolic process to succinate"/>
    <property type="evidence" value="ECO:0007669"/>
    <property type="project" value="UniProtKB-UniRule"/>
</dbReference>
<dbReference type="Gene3D" id="3.75.10.20">
    <property type="entry name" value="Succinylarginine dihydrolase"/>
    <property type="match status" value="1"/>
</dbReference>
<dbReference type="HAMAP" id="MF_01172">
    <property type="entry name" value="AstB"/>
    <property type="match status" value="1"/>
</dbReference>
<dbReference type="InterPro" id="IPR037031">
    <property type="entry name" value="AstB_sf"/>
</dbReference>
<dbReference type="InterPro" id="IPR007079">
    <property type="entry name" value="SuccinylArg_d-Hdrlase_AstB"/>
</dbReference>
<dbReference type="NCBIfam" id="TIGR03241">
    <property type="entry name" value="arg_catab_astB"/>
    <property type="match status" value="1"/>
</dbReference>
<dbReference type="NCBIfam" id="NF009789">
    <property type="entry name" value="PRK13281.1"/>
    <property type="match status" value="1"/>
</dbReference>
<dbReference type="PANTHER" id="PTHR30420">
    <property type="entry name" value="N-SUCCINYLARGININE DIHYDROLASE"/>
    <property type="match status" value="1"/>
</dbReference>
<dbReference type="PANTHER" id="PTHR30420:SF2">
    <property type="entry name" value="N-SUCCINYLARGININE DIHYDROLASE"/>
    <property type="match status" value="1"/>
</dbReference>
<dbReference type="Pfam" id="PF04996">
    <property type="entry name" value="AstB"/>
    <property type="match status" value="1"/>
</dbReference>
<dbReference type="SUPFAM" id="SSF55909">
    <property type="entry name" value="Pentein"/>
    <property type="match status" value="1"/>
</dbReference>
<name>ASTB_PSEA6</name>
<proteinExistence type="inferred from homology"/>
<feature type="chain" id="PRO_0000262363" description="N-succinylarginine dihydrolase">
    <location>
        <begin position="1"/>
        <end position="446"/>
    </location>
</feature>
<feature type="active site" evidence="1">
    <location>
        <position position="174"/>
    </location>
</feature>
<feature type="active site" evidence="1">
    <location>
        <position position="250"/>
    </location>
</feature>
<feature type="active site" description="Nucleophile" evidence="1">
    <location>
        <position position="369"/>
    </location>
</feature>
<feature type="binding site" evidence="1">
    <location>
        <begin position="19"/>
        <end position="28"/>
    </location>
    <ligand>
        <name>substrate</name>
    </ligand>
</feature>
<feature type="binding site" evidence="1">
    <location>
        <position position="110"/>
    </location>
    <ligand>
        <name>substrate</name>
    </ligand>
</feature>
<feature type="binding site" evidence="1">
    <location>
        <begin position="137"/>
        <end position="138"/>
    </location>
    <ligand>
        <name>substrate</name>
    </ligand>
</feature>
<feature type="binding site" evidence="1">
    <location>
        <position position="214"/>
    </location>
    <ligand>
        <name>substrate</name>
    </ligand>
</feature>
<feature type="binding site" evidence="1">
    <location>
        <position position="252"/>
    </location>
    <ligand>
        <name>substrate</name>
    </ligand>
</feature>
<feature type="binding site" evidence="1">
    <location>
        <position position="363"/>
    </location>
    <ligand>
        <name>substrate</name>
    </ligand>
</feature>
<organism>
    <name type="scientific">Pseudoalteromonas atlantica (strain T6c / ATCC BAA-1087)</name>
    <dbReference type="NCBI Taxonomy" id="3042615"/>
    <lineage>
        <taxon>Bacteria</taxon>
        <taxon>Pseudomonadati</taxon>
        <taxon>Pseudomonadota</taxon>
        <taxon>Gammaproteobacteria</taxon>
        <taxon>Alteromonadales</taxon>
        <taxon>Alteromonadaceae</taxon>
        <taxon>Paraglaciecola</taxon>
    </lineage>
</organism>
<keyword id="KW-0056">Arginine metabolism</keyword>
<keyword id="KW-0378">Hydrolase</keyword>
<gene>
    <name evidence="1" type="primary">astB</name>
    <name type="ordered locus">Patl_2357</name>
</gene>
<evidence type="ECO:0000255" key="1">
    <source>
        <dbReference type="HAMAP-Rule" id="MF_01172"/>
    </source>
</evidence>
<reference key="1">
    <citation type="submission" date="2006-06" db="EMBL/GenBank/DDBJ databases">
        <title>Complete sequence of Pseudoalteromonas atlantica T6c.</title>
        <authorList>
            <consortium name="US DOE Joint Genome Institute"/>
            <person name="Copeland A."/>
            <person name="Lucas S."/>
            <person name="Lapidus A."/>
            <person name="Barry K."/>
            <person name="Detter J.C."/>
            <person name="Glavina del Rio T."/>
            <person name="Hammon N."/>
            <person name="Israni S."/>
            <person name="Dalin E."/>
            <person name="Tice H."/>
            <person name="Pitluck S."/>
            <person name="Saunders E."/>
            <person name="Brettin T."/>
            <person name="Bruce D."/>
            <person name="Han C."/>
            <person name="Tapia R."/>
            <person name="Gilna P."/>
            <person name="Schmutz J."/>
            <person name="Larimer F."/>
            <person name="Land M."/>
            <person name="Hauser L."/>
            <person name="Kyrpides N."/>
            <person name="Kim E."/>
            <person name="Karls A.C."/>
            <person name="Bartlett D."/>
            <person name="Higgins B.P."/>
            <person name="Richardson P."/>
        </authorList>
    </citation>
    <scope>NUCLEOTIDE SEQUENCE [LARGE SCALE GENOMIC DNA]</scope>
    <source>
        <strain>T6c / ATCC BAA-1087</strain>
    </source>
</reference>
<sequence>MKQFEVNFDGLVGPTHNYAGLSYGNVASLNNASAQSSPKQAAKQGLKKMKALADLGMIQGVLAPQARPDVDALRRLGFSGSDANVLQQAAKQAPAIFQACCSASSMWTANAATVSPSADTADGKVHFTPANLTNKYHRSLEPQVTGNILKATFANQQYFSHHNHLPDNEHFGDEGAANHTRLCREYGERGVELFVYGRYAFDKSKPAPVKFPARQTFEASQAVARLHGLSDDNVVFIQQNPDLIDQGVFHNDVISVGNQNVLFYHEQAFLDTDKAFAEIKQKYGAGDLHFIKVITEQVSLQDAIKSYLFNTQLVTLANGEMAIIAPTDCEENPAVSAYLNELVSLNTPIKHIRYYDVKQSMRNGGGPACLRLRVAMNETELAAVNQSTMMNDAQFERLNNWVDKHYRDRLSVDDLRDVALLNESRTALDELTQLLKLGSVYPFQKV</sequence>
<comment type="function">
    <text evidence="1">Catalyzes the hydrolysis of N(2)-succinylarginine into N(2)-succinylornithine, ammonia and CO(2).</text>
</comment>
<comment type="catalytic activity">
    <reaction evidence="1">
        <text>N(2)-succinyl-L-arginine + 2 H2O + 2 H(+) = N(2)-succinyl-L-ornithine + 2 NH4(+) + CO2</text>
        <dbReference type="Rhea" id="RHEA:19533"/>
        <dbReference type="ChEBI" id="CHEBI:15377"/>
        <dbReference type="ChEBI" id="CHEBI:15378"/>
        <dbReference type="ChEBI" id="CHEBI:16526"/>
        <dbReference type="ChEBI" id="CHEBI:28938"/>
        <dbReference type="ChEBI" id="CHEBI:58241"/>
        <dbReference type="ChEBI" id="CHEBI:58514"/>
        <dbReference type="EC" id="3.5.3.23"/>
    </reaction>
</comment>
<comment type="pathway">
    <text evidence="1">Amino-acid degradation; L-arginine degradation via AST pathway; L-glutamate and succinate from L-arginine: step 2/5.</text>
</comment>
<comment type="subunit">
    <text evidence="1">Homodimer.</text>
</comment>
<comment type="similarity">
    <text evidence="1">Belongs to the succinylarginine dihydrolase family.</text>
</comment>